<name>CLPX_PSEU2</name>
<reference key="1">
    <citation type="journal article" date="2005" name="Proc. Natl. Acad. Sci. U.S.A.">
        <title>Comparison of the complete genome sequences of Pseudomonas syringae pv. syringae B728a and pv. tomato DC3000.</title>
        <authorList>
            <person name="Feil H."/>
            <person name="Feil W.S."/>
            <person name="Chain P."/>
            <person name="Larimer F."/>
            <person name="Dibartolo G."/>
            <person name="Copeland A."/>
            <person name="Lykidis A."/>
            <person name="Trong S."/>
            <person name="Nolan M."/>
            <person name="Goltsman E."/>
            <person name="Thiel J."/>
            <person name="Malfatti S."/>
            <person name="Loper J.E."/>
            <person name="Lapidus A."/>
            <person name="Detter J.C."/>
            <person name="Land M."/>
            <person name="Richardson P.M."/>
            <person name="Kyrpides N.C."/>
            <person name="Ivanova N."/>
            <person name="Lindow S.E."/>
        </authorList>
    </citation>
    <scope>NUCLEOTIDE SEQUENCE [LARGE SCALE GENOMIC DNA]</scope>
    <source>
        <strain>B728a</strain>
    </source>
</reference>
<accession>Q4ZVM6</accession>
<gene>
    <name evidence="1" type="primary">clpX</name>
    <name type="ordered locus">Psyr_1748</name>
</gene>
<protein>
    <recommendedName>
        <fullName evidence="1">ATP-dependent Clp protease ATP-binding subunit ClpX</fullName>
    </recommendedName>
</protein>
<dbReference type="EMBL" id="CP000075">
    <property type="protein sequence ID" value="AAY36796.1"/>
    <property type="molecule type" value="Genomic_DNA"/>
</dbReference>
<dbReference type="RefSeq" id="WP_002552735.1">
    <property type="nucleotide sequence ID" value="NC_007005.1"/>
</dbReference>
<dbReference type="RefSeq" id="YP_234834.1">
    <property type="nucleotide sequence ID" value="NC_007005.1"/>
</dbReference>
<dbReference type="SMR" id="Q4ZVM6"/>
<dbReference type="STRING" id="205918.Psyr_1748"/>
<dbReference type="GeneID" id="96218174"/>
<dbReference type="KEGG" id="psb:Psyr_1748"/>
<dbReference type="PATRIC" id="fig|205918.7.peg.1786"/>
<dbReference type="eggNOG" id="COG1219">
    <property type="taxonomic scope" value="Bacteria"/>
</dbReference>
<dbReference type="HOGENOM" id="CLU_014218_8_2_6"/>
<dbReference type="OrthoDB" id="9804062at2"/>
<dbReference type="Proteomes" id="UP000000426">
    <property type="component" value="Chromosome"/>
</dbReference>
<dbReference type="GO" id="GO:0009376">
    <property type="term" value="C:HslUV protease complex"/>
    <property type="evidence" value="ECO:0007669"/>
    <property type="project" value="TreeGrafter"/>
</dbReference>
<dbReference type="GO" id="GO:0005524">
    <property type="term" value="F:ATP binding"/>
    <property type="evidence" value="ECO:0007669"/>
    <property type="project" value="UniProtKB-UniRule"/>
</dbReference>
<dbReference type="GO" id="GO:0016887">
    <property type="term" value="F:ATP hydrolysis activity"/>
    <property type="evidence" value="ECO:0007669"/>
    <property type="project" value="InterPro"/>
</dbReference>
<dbReference type="GO" id="GO:0140662">
    <property type="term" value="F:ATP-dependent protein folding chaperone"/>
    <property type="evidence" value="ECO:0007669"/>
    <property type="project" value="InterPro"/>
</dbReference>
<dbReference type="GO" id="GO:0046983">
    <property type="term" value="F:protein dimerization activity"/>
    <property type="evidence" value="ECO:0007669"/>
    <property type="project" value="InterPro"/>
</dbReference>
<dbReference type="GO" id="GO:0051082">
    <property type="term" value="F:unfolded protein binding"/>
    <property type="evidence" value="ECO:0007669"/>
    <property type="project" value="UniProtKB-UniRule"/>
</dbReference>
<dbReference type="GO" id="GO:0008270">
    <property type="term" value="F:zinc ion binding"/>
    <property type="evidence" value="ECO:0007669"/>
    <property type="project" value="InterPro"/>
</dbReference>
<dbReference type="GO" id="GO:0051301">
    <property type="term" value="P:cell division"/>
    <property type="evidence" value="ECO:0007669"/>
    <property type="project" value="TreeGrafter"/>
</dbReference>
<dbReference type="GO" id="GO:0051603">
    <property type="term" value="P:proteolysis involved in protein catabolic process"/>
    <property type="evidence" value="ECO:0007669"/>
    <property type="project" value="TreeGrafter"/>
</dbReference>
<dbReference type="CDD" id="cd19497">
    <property type="entry name" value="RecA-like_ClpX"/>
    <property type="match status" value="1"/>
</dbReference>
<dbReference type="FunFam" id="1.10.8.60:FF:000002">
    <property type="entry name" value="ATP-dependent Clp protease ATP-binding subunit ClpX"/>
    <property type="match status" value="1"/>
</dbReference>
<dbReference type="FunFam" id="3.40.50.300:FF:000005">
    <property type="entry name" value="ATP-dependent Clp protease ATP-binding subunit ClpX"/>
    <property type="match status" value="1"/>
</dbReference>
<dbReference type="Gene3D" id="1.10.8.60">
    <property type="match status" value="1"/>
</dbReference>
<dbReference type="Gene3D" id="6.20.220.10">
    <property type="entry name" value="ClpX chaperone, C4-type zinc finger domain"/>
    <property type="match status" value="1"/>
</dbReference>
<dbReference type="Gene3D" id="3.40.50.300">
    <property type="entry name" value="P-loop containing nucleotide triphosphate hydrolases"/>
    <property type="match status" value="1"/>
</dbReference>
<dbReference type="HAMAP" id="MF_00175">
    <property type="entry name" value="ClpX"/>
    <property type="match status" value="1"/>
</dbReference>
<dbReference type="InterPro" id="IPR003593">
    <property type="entry name" value="AAA+_ATPase"/>
</dbReference>
<dbReference type="InterPro" id="IPR050052">
    <property type="entry name" value="ATP-dep_Clp_protease_ClpX"/>
</dbReference>
<dbReference type="InterPro" id="IPR003959">
    <property type="entry name" value="ATPase_AAA_core"/>
</dbReference>
<dbReference type="InterPro" id="IPR019489">
    <property type="entry name" value="Clp_ATPase_C"/>
</dbReference>
<dbReference type="InterPro" id="IPR004487">
    <property type="entry name" value="Clp_protease_ATP-bd_su_ClpX"/>
</dbReference>
<dbReference type="InterPro" id="IPR046425">
    <property type="entry name" value="ClpX_bact"/>
</dbReference>
<dbReference type="InterPro" id="IPR027417">
    <property type="entry name" value="P-loop_NTPase"/>
</dbReference>
<dbReference type="InterPro" id="IPR010603">
    <property type="entry name" value="Znf_CppX_C4"/>
</dbReference>
<dbReference type="InterPro" id="IPR038366">
    <property type="entry name" value="Znf_CppX_C4_sf"/>
</dbReference>
<dbReference type="NCBIfam" id="TIGR00382">
    <property type="entry name" value="clpX"/>
    <property type="match status" value="1"/>
</dbReference>
<dbReference type="NCBIfam" id="NF003745">
    <property type="entry name" value="PRK05342.1"/>
    <property type="match status" value="1"/>
</dbReference>
<dbReference type="PANTHER" id="PTHR48102:SF7">
    <property type="entry name" value="ATP-DEPENDENT CLP PROTEASE ATP-BINDING SUBUNIT CLPX-LIKE, MITOCHONDRIAL"/>
    <property type="match status" value="1"/>
</dbReference>
<dbReference type="PANTHER" id="PTHR48102">
    <property type="entry name" value="ATP-DEPENDENT CLP PROTEASE ATP-BINDING SUBUNIT CLPX-LIKE, MITOCHONDRIAL-RELATED"/>
    <property type="match status" value="1"/>
</dbReference>
<dbReference type="Pfam" id="PF07724">
    <property type="entry name" value="AAA_2"/>
    <property type="match status" value="1"/>
</dbReference>
<dbReference type="Pfam" id="PF10431">
    <property type="entry name" value="ClpB_D2-small"/>
    <property type="match status" value="1"/>
</dbReference>
<dbReference type="Pfam" id="PF06689">
    <property type="entry name" value="zf-C4_ClpX"/>
    <property type="match status" value="1"/>
</dbReference>
<dbReference type="SMART" id="SM00382">
    <property type="entry name" value="AAA"/>
    <property type="match status" value="1"/>
</dbReference>
<dbReference type="SMART" id="SM01086">
    <property type="entry name" value="ClpB_D2-small"/>
    <property type="match status" value="1"/>
</dbReference>
<dbReference type="SMART" id="SM00994">
    <property type="entry name" value="zf-C4_ClpX"/>
    <property type="match status" value="1"/>
</dbReference>
<dbReference type="SUPFAM" id="SSF57716">
    <property type="entry name" value="Glucocorticoid receptor-like (DNA-binding domain)"/>
    <property type="match status" value="1"/>
</dbReference>
<dbReference type="SUPFAM" id="SSF52540">
    <property type="entry name" value="P-loop containing nucleoside triphosphate hydrolases"/>
    <property type="match status" value="1"/>
</dbReference>
<dbReference type="PROSITE" id="PS51902">
    <property type="entry name" value="CLPX_ZB"/>
    <property type="match status" value="1"/>
</dbReference>
<sequence>MTDTRNGEDNGKLLYCSFCGKSQHEVRKLIAGPSVFICDECVDLCNDIIREEVQEAQAESSAHKLPSPKEISGILDQYVIGQERAKKVLAVAVYNHYKRLNQRDKKNDDVELGKSNILLIGPTGSGKTLLAETLARLLNVPFTIADATTLTEAGYVGEDVENIIQKLLQKCDYDVEKAQMGIVYIDEIDKISRKSDNPSITRDVSGEGVQQALLKLIEGTVASVPPQGGRKHPQQEFLQVDTRNILFICGGAFSGLEKVIQNRSTRGGIGFNAEVRSKEEGKKVGESLREVEPDDLVKFGLIPEFVGRLPVLATLDELDEAALIQILTEPKNALTKQYAKLFEMEGVDLEFRTDALKSVARRALERKTGARGLRSILEGVLLDTMYEIPSQSDVSKVVIDESVIDGTSKPLLIYENSEPPAKVAPDA</sequence>
<comment type="function">
    <text evidence="1">ATP-dependent specificity component of the Clp protease. It directs the protease to specific substrates. Can perform chaperone functions in the absence of ClpP.</text>
</comment>
<comment type="subunit">
    <text evidence="1">Component of the ClpX-ClpP complex. Forms a hexameric ring that, in the presence of ATP, binds to fourteen ClpP subunits assembled into a disk-like structure with a central cavity, resembling the structure of eukaryotic proteasomes.</text>
</comment>
<comment type="similarity">
    <text evidence="1">Belongs to the ClpX chaperone family.</text>
</comment>
<organism>
    <name type="scientific">Pseudomonas syringae pv. syringae (strain B728a)</name>
    <dbReference type="NCBI Taxonomy" id="205918"/>
    <lineage>
        <taxon>Bacteria</taxon>
        <taxon>Pseudomonadati</taxon>
        <taxon>Pseudomonadota</taxon>
        <taxon>Gammaproteobacteria</taxon>
        <taxon>Pseudomonadales</taxon>
        <taxon>Pseudomonadaceae</taxon>
        <taxon>Pseudomonas</taxon>
        <taxon>Pseudomonas syringae</taxon>
    </lineage>
</organism>
<proteinExistence type="inferred from homology"/>
<keyword id="KW-0067">ATP-binding</keyword>
<keyword id="KW-0143">Chaperone</keyword>
<keyword id="KW-0479">Metal-binding</keyword>
<keyword id="KW-0547">Nucleotide-binding</keyword>
<keyword id="KW-0862">Zinc</keyword>
<evidence type="ECO:0000255" key="1">
    <source>
        <dbReference type="HAMAP-Rule" id="MF_00175"/>
    </source>
</evidence>
<evidence type="ECO:0000255" key="2">
    <source>
        <dbReference type="PROSITE-ProRule" id="PRU01250"/>
    </source>
</evidence>
<feature type="chain" id="PRO_1000024626" description="ATP-dependent Clp protease ATP-binding subunit ClpX">
    <location>
        <begin position="1"/>
        <end position="427"/>
    </location>
</feature>
<feature type="domain" description="ClpX-type ZB" evidence="2">
    <location>
        <begin position="4"/>
        <end position="57"/>
    </location>
</feature>
<feature type="binding site" evidence="2">
    <location>
        <position position="16"/>
    </location>
    <ligand>
        <name>Zn(2+)</name>
        <dbReference type="ChEBI" id="CHEBI:29105"/>
    </ligand>
</feature>
<feature type="binding site" evidence="2">
    <location>
        <position position="19"/>
    </location>
    <ligand>
        <name>Zn(2+)</name>
        <dbReference type="ChEBI" id="CHEBI:29105"/>
    </ligand>
</feature>
<feature type="binding site" evidence="2">
    <location>
        <position position="38"/>
    </location>
    <ligand>
        <name>Zn(2+)</name>
        <dbReference type="ChEBI" id="CHEBI:29105"/>
    </ligand>
</feature>
<feature type="binding site" evidence="2">
    <location>
        <position position="41"/>
    </location>
    <ligand>
        <name>Zn(2+)</name>
        <dbReference type="ChEBI" id="CHEBI:29105"/>
    </ligand>
</feature>
<feature type="binding site" evidence="1">
    <location>
        <begin position="122"/>
        <end position="129"/>
    </location>
    <ligand>
        <name>ATP</name>
        <dbReference type="ChEBI" id="CHEBI:30616"/>
    </ligand>
</feature>